<sequence>MVTINNARKILQRVDTLPLYLHAYAFHLNMRLERVLPADLLDIASENNLRGVKIHVLDGERFSLGNMDDKELSAFGDKARRLNLDIHIETSASDKASIDEAVAIALKTGASSVRFYPRYEGNLRDVLSIIANDIAYVRETYQDSGLTFTIEQHEDLKSHELVSLVKESEMESLSLLFDFANMINANEHPIDALKTMAPHITQVHIKDALIVKEPGGLGHKACISGQGDMPFKALLTHLICLGDDEPQVTAYGLEEEVDYYAPAFRFEDEDDNPWIPYRQMSETPLPENHLLDARLRKEKEDAINQINHVRNVLQQIKQEANHLLNH</sequence>
<reference key="1">
    <citation type="journal article" date="1993" name="Nucleic Acids Res.">
        <title>Analysis of the Escherichia coli genome. III. DNA sequence of the region from 87.2 to 89.2 minutes.</title>
        <authorList>
            <person name="Plunkett G. III"/>
            <person name="Burland V."/>
            <person name="Daniels D.L."/>
            <person name="Blattner F.R."/>
        </authorList>
    </citation>
    <scope>NUCLEOTIDE SEQUENCE [LARGE SCALE GENOMIC DNA]</scope>
    <source>
        <strain>K12 / MG1655 / ATCC 47076</strain>
    </source>
</reference>
<reference key="2">
    <citation type="journal article" date="1997" name="Science">
        <title>The complete genome sequence of Escherichia coli K-12.</title>
        <authorList>
            <person name="Blattner F.R."/>
            <person name="Plunkett G. III"/>
            <person name="Bloch C.A."/>
            <person name="Perna N.T."/>
            <person name="Burland V."/>
            <person name="Riley M."/>
            <person name="Collado-Vides J."/>
            <person name="Glasner J.D."/>
            <person name="Rode C.K."/>
            <person name="Mayhew G.F."/>
            <person name="Gregor J."/>
            <person name="Davis N.W."/>
            <person name="Kirkpatrick H.A."/>
            <person name="Goeden M.A."/>
            <person name="Rose D.J."/>
            <person name="Mau B."/>
            <person name="Shao Y."/>
        </authorList>
    </citation>
    <scope>NUCLEOTIDE SEQUENCE [LARGE SCALE GENOMIC DNA]</scope>
    <source>
        <strain>K12 / MG1655 / ATCC 47076</strain>
    </source>
</reference>
<reference key="3">
    <citation type="journal article" date="2006" name="Mol. Syst. Biol.">
        <title>Highly accurate genome sequences of Escherichia coli K-12 strains MG1655 and W3110.</title>
        <authorList>
            <person name="Hayashi K."/>
            <person name="Morooka N."/>
            <person name="Yamamoto Y."/>
            <person name="Fujita K."/>
            <person name="Isono K."/>
            <person name="Choi S."/>
            <person name="Ohtsubo E."/>
            <person name="Baba T."/>
            <person name="Wanner B.L."/>
            <person name="Mori H."/>
            <person name="Horiuchi T."/>
        </authorList>
    </citation>
    <scope>NUCLEOTIDE SEQUENCE [LARGE SCALE GENOMIC DNA]</scope>
    <source>
        <strain>K12 / W3110 / ATCC 27325 / DSM 5911</strain>
    </source>
</reference>
<feature type="chain" id="PRO_0000169675" description="Uncharacterized protein YihM">
    <location>
        <begin position="1"/>
        <end position="326"/>
    </location>
</feature>
<keyword id="KW-1185">Reference proteome</keyword>
<protein>
    <recommendedName>
        <fullName>Uncharacterized protein YihM</fullName>
    </recommendedName>
</protein>
<name>YIHM_ECOLI</name>
<accession>P32134</accession>
<accession>Q2M8H0</accession>
<proteinExistence type="predicted"/>
<dbReference type="EMBL" id="L19201">
    <property type="protein sequence ID" value="AAB03007.1"/>
    <property type="molecule type" value="Genomic_DNA"/>
</dbReference>
<dbReference type="EMBL" id="U00096">
    <property type="protein sequence ID" value="AAC76870.1"/>
    <property type="molecule type" value="Genomic_DNA"/>
</dbReference>
<dbReference type="EMBL" id="AP009048">
    <property type="protein sequence ID" value="BAE77436.1"/>
    <property type="molecule type" value="Genomic_DNA"/>
</dbReference>
<dbReference type="PIR" id="S40818">
    <property type="entry name" value="S40818"/>
</dbReference>
<dbReference type="RefSeq" id="NP_418309.1">
    <property type="nucleotide sequence ID" value="NC_000913.3"/>
</dbReference>
<dbReference type="RefSeq" id="WP_000256396.1">
    <property type="nucleotide sequence ID" value="NZ_SSZK01000026.1"/>
</dbReference>
<dbReference type="SMR" id="P32134"/>
<dbReference type="BioGRID" id="4262633">
    <property type="interactions" value="7"/>
</dbReference>
<dbReference type="DIP" id="DIP-12494N"/>
<dbReference type="FunCoup" id="P32134">
    <property type="interactions" value="31"/>
</dbReference>
<dbReference type="IntAct" id="P32134">
    <property type="interactions" value="1"/>
</dbReference>
<dbReference type="STRING" id="511145.b3873"/>
<dbReference type="jPOST" id="P32134"/>
<dbReference type="PaxDb" id="511145-b3873"/>
<dbReference type="EnsemblBacteria" id="AAC76870">
    <property type="protein sequence ID" value="AAC76870"/>
    <property type="gene ID" value="b3873"/>
</dbReference>
<dbReference type="GeneID" id="948367"/>
<dbReference type="KEGG" id="ecj:JW3844"/>
<dbReference type="KEGG" id="eco:b3873"/>
<dbReference type="KEGG" id="ecoc:C3026_20940"/>
<dbReference type="PATRIC" id="fig|1411691.4.peg.2838"/>
<dbReference type="EchoBASE" id="EB1785"/>
<dbReference type="eggNOG" id="COG1082">
    <property type="taxonomic scope" value="Bacteria"/>
</dbReference>
<dbReference type="HOGENOM" id="CLU_081530_0_0_6"/>
<dbReference type="InParanoid" id="P32134"/>
<dbReference type="OMA" id="VEHWLPW"/>
<dbReference type="OrthoDB" id="8421472at2"/>
<dbReference type="PhylomeDB" id="P32134"/>
<dbReference type="BioCyc" id="EcoCyc:EG11839-MONOMER"/>
<dbReference type="PRO" id="PR:P32134"/>
<dbReference type="Proteomes" id="UP000000625">
    <property type="component" value="Chromosome"/>
</dbReference>
<dbReference type="Gene3D" id="3.20.20.150">
    <property type="entry name" value="Divalent-metal-dependent TIM barrel enzymes"/>
    <property type="match status" value="1"/>
</dbReference>
<dbReference type="InterPro" id="IPR050312">
    <property type="entry name" value="IolE/XylAMocC-like"/>
</dbReference>
<dbReference type="InterPro" id="IPR036237">
    <property type="entry name" value="Xyl_isomerase-like_sf"/>
</dbReference>
<dbReference type="InterPro" id="IPR013022">
    <property type="entry name" value="Xyl_isomerase-like_TIM-brl"/>
</dbReference>
<dbReference type="PANTHER" id="PTHR12110:SF53">
    <property type="entry name" value="BLR5974 PROTEIN"/>
    <property type="match status" value="1"/>
</dbReference>
<dbReference type="PANTHER" id="PTHR12110">
    <property type="entry name" value="HYDROXYPYRUVATE ISOMERASE"/>
    <property type="match status" value="1"/>
</dbReference>
<dbReference type="Pfam" id="PF01261">
    <property type="entry name" value="AP_endonuc_2"/>
    <property type="match status" value="1"/>
</dbReference>
<dbReference type="SUPFAM" id="SSF51658">
    <property type="entry name" value="Xylose isomerase-like"/>
    <property type="match status" value="1"/>
</dbReference>
<gene>
    <name type="primary">yihM</name>
    <name type="ordered locus">b3873</name>
    <name type="ordered locus">JW3844</name>
</gene>
<organism>
    <name type="scientific">Escherichia coli (strain K12)</name>
    <dbReference type="NCBI Taxonomy" id="83333"/>
    <lineage>
        <taxon>Bacteria</taxon>
        <taxon>Pseudomonadati</taxon>
        <taxon>Pseudomonadota</taxon>
        <taxon>Gammaproteobacteria</taxon>
        <taxon>Enterobacterales</taxon>
        <taxon>Enterobacteriaceae</taxon>
        <taxon>Escherichia</taxon>
    </lineage>
</organism>